<keyword id="KW-0968">Cytoplasmic vesicle</keyword>
<keyword id="KW-1015">Disulfide bond</keyword>
<keyword id="KW-0278">Fertilization</keyword>
<keyword id="KW-0325">Glycoprotein</keyword>
<keyword id="KW-1267">Proteomics identification</keyword>
<keyword id="KW-1185">Reference proteome</keyword>
<keyword id="KW-0732">Signal</keyword>
<organism>
    <name type="scientific">Homo sapiens</name>
    <name type="common">Human</name>
    <dbReference type="NCBI Taxonomy" id="9606"/>
    <lineage>
        <taxon>Eukaryota</taxon>
        <taxon>Metazoa</taxon>
        <taxon>Chordata</taxon>
        <taxon>Craniata</taxon>
        <taxon>Vertebrata</taxon>
        <taxon>Euteleostomi</taxon>
        <taxon>Mammalia</taxon>
        <taxon>Eutheria</taxon>
        <taxon>Euarchontoglires</taxon>
        <taxon>Primates</taxon>
        <taxon>Haplorrhini</taxon>
        <taxon>Catarrhini</taxon>
        <taxon>Hominidae</taxon>
        <taxon>Homo</taxon>
    </lineage>
</organism>
<reference key="1">
    <citation type="journal article" date="1994" name="Biol. Reprod.">
        <title>Complementary deoxyribonucleic acid cloning and molecular characterization of an estrogen-dependent human oviductal glycoprotein.</title>
        <authorList>
            <person name="Arias E.B."/>
            <person name="Verhage H.G."/>
            <person name="Jaffe R.C."/>
        </authorList>
    </citation>
    <scope>NUCLEOTIDE SEQUENCE [MRNA]</scope>
    <source>
        <tissue>Oviduct</tissue>
    </source>
</reference>
<reference key="2">
    <citation type="submission" date="1996-07" db="EMBL/GenBank/DDBJ databases">
        <title>Human oviductal glycoprotein gene.</title>
        <authorList>
            <person name="Jaffe R.C."/>
        </authorList>
    </citation>
    <scope>NUCLEOTIDE SEQUENCE [GENOMIC DNA]</scope>
    <scope>VARIANTS THR-477; HIS-514 AND GLN-676</scope>
</reference>
<reference key="3">
    <citation type="journal article" date="2006" name="Nature">
        <title>The DNA sequence and biological annotation of human chromosome 1.</title>
        <authorList>
            <person name="Gregory S.G."/>
            <person name="Barlow K.F."/>
            <person name="McLay K.E."/>
            <person name="Kaul R."/>
            <person name="Swarbreck D."/>
            <person name="Dunham A."/>
            <person name="Scott C.E."/>
            <person name="Howe K.L."/>
            <person name="Woodfine K."/>
            <person name="Spencer C.C.A."/>
            <person name="Jones M.C."/>
            <person name="Gillson C."/>
            <person name="Searle S."/>
            <person name="Zhou Y."/>
            <person name="Kokocinski F."/>
            <person name="McDonald L."/>
            <person name="Evans R."/>
            <person name="Phillips K."/>
            <person name="Atkinson A."/>
            <person name="Cooper R."/>
            <person name="Jones C."/>
            <person name="Hall R.E."/>
            <person name="Andrews T.D."/>
            <person name="Lloyd C."/>
            <person name="Ainscough R."/>
            <person name="Almeida J.P."/>
            <person name="Ambrose K.D."/>
            <person name="Anderson F."/>
            <person name="Andrew R.W."/>
            <person name="Ashwell R.I.S."/>
            <person name="Aubin K."/>
            <person name="Babbage A.K."/>
            <person name="Bagguley C.L."/>
            <person name="Bailey J."/>
            <person name="Beasley H."/>
            <person name="Bethel G."/>
            <person name="Bird C.P."/>
            <person name="Bray-Allen S."/>
            <person name="Brown J.Y."/>
            <person name="Brown A.J."/>
            <person name="Buckley D."/>
            <person name="Burton J."/>
            <person name="Bye J."/>
            <person name="Carder C."/>
            <person name="Chapman J.C."/>
            <person name="Clark S.Y."/>
            <person name="Clarke G."/>
            <person name="Clee C."/>
            <person name="Cobley V."/>
            <person name="Collier R.E."/>
            <person name="Corby N."/>
            <person name="Coville G.J."/>
            <person name="Davies J."/>
            <person name="Deadman R."/>
            <person name="Dunn M."/>
            <person name="Earthrowl M."/>
            <person name="Ellington A.G."/>
            <person name="Errington H."/>
            <person name="Frankish A."/>
            <person name="Frankland J."/>
            <person name="French L."/>
            <person name="Garner P."/>
            <person name="Garnett J."/>
            <person name="Gay L."/>
            <person name="Ghori M.R.J."/>
            <person name="Gibson R."/>
            <person name="Gilby L.M."/>
            <person name="Gillett W."/>
            <person name="Glithero R.J."/>
            <person name="Grafham D.V."/>
            <person name="Griffiths C."/>
            <person name="Griffiths-Jones S."/>
            <person name="Grocock R."/>
            <person name="Hammond S."/>
            <person name="Harrison E.S.I."/>
            <person name="Hart E."/>
            <person name="Haugen E."/>
            <person name="Heath P.D."/>
            <person name="Holmes S."/>
            <person name="Holt K."/>
            <person name="Howden P.J."/>
            <person name="Hunt A.R."/>
            <person name="Hunt S.E."/>
            <person name="Hunter G."/>
            <person name="Isherwood J."/>
            <person name="James R."/>
            <person name="Johnson C."/>
            <person name="Johnson D."/>
            <person name="Joy A."/>
            <person name="Kay M."/>
            <person name="Kershaw J.K."/>
            <person name="Kibukawa M."/>
            <person name="Kimberley A.M."/>
            <person name="King A."/>
            <person name="Knights A.J."/>
            <person name="Lad H."/>
            <person name="Laird G."/>
            <person name="Lawlor S."/>
            <person name="Leongamornlert D.A."/>
            <person name="Lloyd D.M."/>
            <person name="Loveland J."/>
            <person name="Lovell J."/>
            <person name="Lush M.J."/>
            <person name="Lyne R."/>
            <person name="Martin S."/>
            <person name="Mashreghi-Mohammadi M."/>
            <person name="Matthews L."/>
            <person name="Matthews N.S.W."/>
            <person name="McLaren S."/>
            <person name="Milne S."/>
            <person name="Mistry S."/>
            <person name="Moore M.J.F."/>
            <person name="Nickerson T."/>
            <person name="O'Dell C.N."/>
            <person name="Oliver K."/>
            <person name="Palmeiri A."/>
            <person name="Palmer S.A."/>
            <person name="Parker A."/>
            <person name="Patel D."/>
            <person name="Pearce A.V."/>
            <person name="Peck A.I."/>
            <person name="Pelan S."/>
            <person name="Phelps K."/>
            <person name="Phillimore B.J."/>
            <person name="Plumb R."/>
            <person name="Rajan J."/>
            <person name="Raymond C."/>
            <person name="Rouse G."/>
            <person name="Saenphimmachak C."/>
            <person name="Sehra H.K."/>
            <person name="Sheridan E."/>
            <person name="Shownkeen R."/>
            <person name="Sims S."/>
            <person name="Skuce C.D."/>
            <person name="Smith M."/>
            <person name="Steward C."/>
            <person name="Subramanian S."/>
            <person name="Sycamore N."/>
            <person name="Tracey A."/>
            <person name="Tromans A."/>
            <person name="Van Helmond Z."/>
            <person name="Wall M."/>
            <person name="Wallis J.M."/>
            <person name="White S."/>
            <person name="Whitehead S.L."/>
            <person name="Wilkinson J.E."/>
            <person name="Willey D.L."/>
            <person name="Williams H."/>
            <person name="Wilming L."/>
            <person name="Wray P.W."/>
            <person name="Wu Z."/>
            <person name="Coulson A."/>
            <person name="Vaudin M."/>
            <person name="Sulston J.E."/>
            <person name="Durbin R.M."/>
            <person name="Hubbard T."/>
            <person name="Wooster R."/>
            <person name="Dunham I."/>
            <person name="Carter N.P."/>
            <person name="McVean G."/>
            <person name="Ross M.T."/>
            <person name="Harrow J."/>
            <person name="Olson M.V."/>
            <person name="Beck S."/>
            <person name="Rogers J."/>
            <person name="Bentley D.R."/>
        </authorList>
    </citation>
    <scope>NUCLEOTIDE SEQUENCE [LARGE SCALE GENOMIC DNA]</scope>
</reference>
<reference key="4">
    <citation type="journal article" date="2004" name="Genome Res.">
        <title>The status, quality, and expansion of the NIH full-length cDNA project: the Mammalian Gene Collection (MGC).</title>
        <authorList>
            <consortium name="The MGC Project Team"/>
        </authorList>
    </citation>
    <scope>NUCLEOTIDE SEQUENCE [LARGE SCALE MRNA]</scope>
    <source>
        <tissue>Testis</tissue>
    </source>
</reference>
<reference key="5">
    <citation type="journal article" date="2006" name="Science">
        <title>The consensus coding sequences of human breast and colorectal cancers.</title>
        <authorList>
            <person name="Sjoeblom T."/>
            <person name="Jones S."/>
            <person name="Wood L.D."/>
            <person name="Parsons D.W."/>
            <person name="Lin J."/>
            <person name="Barber T.D."/>
            <person name="Mandelker D."/>
            <person name="Leary R.J."/>
            <person name="Ptak J."/>
            <person name="Silliman N."/>
            <person name="Szabo S."/>
            <person name="Buckhaults P."/>
            <person name="Farrell C."/>
            <person name="Meeh P."/>
            <person name="Markowitz S.D."/>
            <person name="Willis J."/>
            <person name="Dawson D."/>
            <person name="Willson J.K.V."/>
            <person name="Gazdar A.F."/>
            <person name="Hartigan J."/>
            <person name="Wu L."/>
            <person name="Liu C."/>
            <person name="Parmigiani G."/>
            <person name="Park B.H."/>
            <person name="Bachman K.E."/>
            <person name="Papadopoulos N."/>
            <person name="Vogelstein B."/>
            <person name="Kinzler K.W."/>
            <person name="Velculescu V.E."/>
        </authorList>
    </citation>
    <scope>VARIANT [LARGE SCALE ANALYSIS] HIS-662</scope>
</reference>
<accession>Q12889</accession>
<accession>A0AV19</accession>
<accession>B9EGE1</accession>
<accession>Q15841</accession>
<feature type="signal peptide" evidence="1">
    <location>
        <begin position="1"/>
        <end position="21"/>
    </location>
</feature>
<feature type="chain" id="PRO_0000011973" description="Oviduct-specific glycoprotein">
    <location>
        <begin position="22"/>
        <end position="678"/>
    </location>
</feature>
<feature type="domain" description="GH18" evidence="3">
    <location>
        <begin position="22"/>
        <end position="385"/>
    </location>
</feature>
<feature type="region of interest" description="Disordered" evidence="4">
    <location>
        <begin position="524"/>
        <end position="544"/>
    </location>
</feature>
<feature type="region of interest" description="Disordered" evidence="4">
    <location>
        <begin position="581"/>
        <end position="606"/>
    </location>
</feature>
<feature type="region of interest" description="Disordered" evidence="4">
    <location>
        <begin position="651"/>
        <end position="678"/>
    </location>
</feature>
<feature type="compositionally biased region" description="Polar residues" evidence="4">
    <location>
        <begin position="528"/>
        <end position="544"/>
    </location>
</feature>
<feature type="compositionally biased region" description="Polar residues" evidence="4">
    <location>
        <begin position="651"/>
        <end position="662"/>
    </location>
</feature>
<feature type="binding site" evidence="3">
    <location>
        <begin position="71"/>
        <end position="72"/>
    </location>
    <ligand>
        <name>chitin</name>
        <dbReference type="ChEBI" id="CHEBI:17029"/>
    </ligand>
</feature>
<feature type="binding site" evidence="3">
    <location>
        <begin position="98"/>
        <end position="101"/>
    </location>
    <ligand>
        <name>chitin</name>
        <dbReference type="ChEBI" id="CHEBI:17029"/>
    </ligand>
</feature>
<feature type="binding site" evidence="3">
    <location>
        <position position="142"/>
    </location>
    <ligand>
        <name>chitin</name>
        <dbReference type="ChEBI" id="CHEBI:17029"/>
    </ligand>
</feature>
<feature type="binding site" evidence="3">
    <location>
        <begin position="211"/>
        <end position="214"/>
    </location>
    <ligand>
        <name>chitin</name>
        <dbReference type="ChEBI" id="CHEBI:17029"/>
    </ligand>
</feature>
<feature type="binding site" evidence="3">
    <location>
        <position position="355"/>
    </location>
    <ligand>
        <name>chitin</name>
        <dbReference type="ChEBI" id="CHEBI:17029"/>
    </ligand>
</feature>
<feature type="glycosylation site" description="N-linked (GlcNAc...) asparagine" evidence="2">
    <location>
        <position position="402"/>
    </location>
</feature>
<feature type="glycosylation site" description="N-linked (GlcNAc...) asparagine" evidence="2">
    <location>
        <position position="441"/>
    </location>
</feature>
<feature type="glycosylation site" description="N-linked (GlcNAc...) asparagine" evidence="2">
    <location>
        <position position="580"/>
    </location>
</feature>
<feature type="glycosylation site" description="N-linked (GlcNAc...) asparagine" evidence="2">
    <location>
        <position position="596"/>
    </location>
</feature>
<feature type="glycosylation site" description="N-linked (GlcNAc...) asparagine" evidence="2">
    <location>
        <position position="648"/>
    </location>
</feature>
<feature type="disulfide bond" evidence="3">
    <location>
        <begin position="26"/>
        <end position="51"/>
    </location>
</feature>
<feature type="sequence variant" id="VAR_049199" description="In dbSNP:rs17027633.">
    <original>D</original>
    <variation>E</variation>
    <location>
        <position position="332"/>
    </location>
</feature>
<feature type="sequence variant" id="VAR_024459" description="In dbSNP:rs2485319." evidence="6">
    <original>M</original>
    <variation>T</variation>
    <location>
        <position position="477"/>
    </location>
</feature>
<feature type="sequence variant" id="VAR_049200" description="In dbSNP:rs3767607.">
    <original>M</original>
    <variation>V</variation>
    <location>
        <position position="479"/>
    </location>
</feature>
<feature type="sequence variant" id="VAR_049201" description="In dbSNP:rs1126656." evidence="6">
    <original>Y</original>
    <variation>H</variation>
    <location>
        <position position="514"/>
    </location>
</feature>
<feature type="sequence variant" id="VAR_061190" description="In dbSNP:rs12096782.">
    <original>P</original>
    <variation>S</variation>
    <location>
        <position position="526"/>
    </location>
</feature>
<feature type="sequence variant" id="VAR_049202" description="In dbSNP:rs3767609.">
    <original>S</original>
    <variation>G</variation>
    <location>
        <position position="536"/>
    </location>
</feature>
<feature type="sequence variant" id="VAR_024460" description="In dbSNP:rs10067.">
    <original>H</original>
    <variation>Q</variation>
    <location>
        <position position="604"/>
    </location>
</feature>
<feature type="sequence variant" id="VAR_035752" description="In a colorectal cancer sample; somatic mutation." evidence="5">
    <original>L</original>
    <variation>H</variation>
    <location>
        <position position="662"/>
    </location>
</feature>
<feature type="sequence variant" id="VAR_016109" description="In dbSNP:rs7825." evidence="6">
    <original>E</original>
    <variation>Q</variation>
    <location>
        <position position="676"/>
    </location>
</feature>
<feature type="sequence conflict" description="In Ref. 2; AAB04126." evidence="7" ref="2">
    <original>S</original>
    <variation>P</variation>
    <location>
        <position position="511"/>
    </location>
</feature>
<sequence>MWKLLLWVGLVLVLKHHDGAAHKLVCYFTNWAHSRPGPASILPHDLDPFLCTHLIFAFASMNNNQIVAKDLQDEKILYPEFNKLKERNRELKTLLSIGGWNFGTSRFTTMLSTFANREKFIASVISLLRTHDFDGLDLFFLYPGLRGSPMHDRWTFLFLIEELLFAFRKEALLTMRPRLLLSAAVSGVPHIVQTSYDVRFLGRLLDFINVLSYDLHGSWERFTGHNSPLFSLPEDPKSSAYAMNYWRKLGAPSEKLIMGIPTYGRTFRLLKASKNGLQARAIGPASPGKYTKQEGFLAYFEICSFVWGAKKHWIDYQYVPYANKGKEWVGYDNAISFSYKAWFIRREHFGGAMVWTLDMDDVRGTFCGTGPFPLVYVLNDILVRAEFSSTSLPQFWLSSAVNSSSTDPERLAVTTAWTTDSKILPPGGEAGVTEIHGKCENMTITPRGTTVTPTKETVSLGKHTVALGEKTEITGAMTMTSVGHQSMTPGEKALTPVGHQSVTTGQKTLTSVGYQSVTPGEKTLTPVGHQSVTPVSHQSVSPGGTTMTPVHFQTETLRQNTVAPRRKAVAREKVTVPSRNISVTPEGQTMPLRGENLTSEVGTHPRMGNLGLQMEAENRMMLSSSPVIQLPEQTPLAFDNRFVPIYGNHSSVNSVTPQTSPLSLKKEIPENSAVDEEA</sequence>
<name>OVGP1_HUMAN</name>
<proteinExistence type="evidence at protein level"/>
<evidence type="ECO:0000250" key="1"/>
<evidence type="ECO:0000255" key="2"/>
<evidence type="ECO:0000255" key="3">
    <source>
        <dbReference type="PROSITE-ProRule" id="PRU01258"/>
    </source>
</evidence>
<evidence type="ECO:0000256" key="4">
    <source>
        <dbReference type="SAM" id="MobiDB-lite"/>
    </source>
</evidence>
<evidence type="ECO:0000269" key="5">
    <source>
    </source>
</evidence>
<evidence type="ECO:0000269" key="6">
    <source ref="2"/>
</evidence>
<evidence type="ECO:0000305" key="7"/>
<protein>
    <recommendedName>
        <fullName>Oviduct-specific glycoprotein</fullName>
    </recommendedName>
    <alternativeName>
        <fullName>Estrogen-dependent oviduct protein</fullName>
    </alternativeName>
    <alternativeName>
        <fullName>Mucin-9</fullName>
    </alternativeName>
    <alternativeName>
        <fullName>Oviductal glycoprotein</fullName>
    </alternativeName>
    <alternativeName>
        <fullName>Oviductin</fullName>
    </alternativeName>
</protein>
<dbReference type="EMBL" id="U09550">
    <property type="protein sequence ID" value="AAA86946.1"/>
    <property type="molecule type" value="mRNA"/>
</dbReference>
<dbReference type="EMBL" id="U58010">
    <property type="protein sequence ID" value="AAB04126.1"/>
    <property type="molecule type" value="Genomic_DNA"/>
</dbReference>
<dbReference type="EMBL" id="U58001">
    <property type="protein sequence ID" value="AAB04126.1"/>
    <property type="status" value="JOINED"/>
    <property type="molecule type" value="Genomic_DNA"/>
</dbReference>
<dbReference type="EMBL" id="U58002">
    <property type="protein sequence ID" value="AAB04126.1"/>
    <property type="status" value="JOINED"/>
    <property type="molecule type" value="Genomic_DNA"/>
</dbReference>
<dbReference type="EMBL" id="U58003">
    <property type="protein sequence ID" value="AAB04126.1"/>
    <property type="status" value="JOINED"/>
    <property type="molecule type" value="Genomic_DNA"/>
</dbReference>
<dbReference type="EMBL" id="U58004">
    <property type="protein sequence ID" value="AAB04126.1"/>
    <property type="status" value="JOINED"/>
    <property type="molecule type" value="Genomic_DNA"/>
</dbReference>
<dbReference type="EMBL" id="U58005">
    <property type="protein sequence ID" value="AAB04126.1"/>
    <property type="status" value="JOINED"/>
    <property type="molecule type" value="Genomic_DNA"/>
</dbReference>
<dbReference type="EMBL" id="U58006">
    <property type="protein sequence ID" value="AAB04126.1"/>
    <property type="status" value="JOINED"/>
    <property type="molecule type" value="Genomic_DNA"/>
</dbReference>
<dbReference type="EMBL" id="U58007">
    <property type="protein sequence ID" value="AAB04126.1"/>
    <property type="status" value="JOINED"/>
    <property type="molecule type" value="Genomic_DNA"/>
</dbReference>
<dbReference type="EMBL" id="U58008">
    <property type="protein sequence ID" value="AAB04126.1"/>
    <property type="status" value="JOINED"/>
    <property type="molecule type" value="Genomic_DNA"/>
</dbReference>
<dbReference type="EMBL" id="U58009">
    <property type="protein sequence ID" value="AAB04126.1"/>
    <property type="status" value="JOINED"/>
    <property type="molecule type" value="Genomic_DNA"/>
</dbReference>
<dbReference type="EMBL" id="AL390195">
    <property type="status" value="NOT_ANNOTATED_CDS"/>
    <property type="molecule type" value="Genomic_DNA"/>
</dbReference>
<dbReference type="EMBL" id="BC126177">
    <property type="protein sequence ID" value="AAI26178.1"/>
    <property type="molecule type" value="mRNA"/>
</dbReference>
<dbReference type="EMBL" id="BC136406">
    <property type="protein sequence ID" value="AAI36407.1"/>
    <property type="molecule type" value="mRNA"/>
</dbReference>
<dbReference type="CCDS" id="CCDS834.1"/>
<dbReference type="RefSeq" id="NP_002548.3">
    <property type="nucleotide sequence ID" value="NM_002557.3"/>
</dbReference>
<dbReference type="SMR" id="Q12889"/>
<dbReference type="BioGRID" id="111056">
    <property type="interactions" value="6"/>
</dbReference>
<dbReference type="FunCoup" id="Q12889">
    <property type="interactions" value="24"/>
</dbReference>
<dbReference type="IntAct" id="Q12889">
    <property type="interactions" value="4"/>
</dbReference>
<dbReference type="STRING" id="9606.ENSP00000358747"/>
<dbReference type="CAZy" id="GH18">
    <property type="family name" value="Glycoside Hydrolase Family 18"/>
</dbReference>
<dbReference type="GlyCosmos" id="Q12889">
    <property type="glycosylation" value="5 sites, No reported glycans"/>
</dbReference>
<dbReference type="GlyGen" id="Q12889">
    <property type="glycosylation" value="8 sites, 1 O-linked glycan (1 site)"/>
</dbReference>
<dbReference type="iPTMnet" id="Q12889"/>
<dbReference type="PhosphoSitePlus" id="Q12889"/>
<dbReference type="BioMuta" id="OVGP1"/>
<dbReference type="DMDM" id="2493676"/>
<dbReference type="CPTAC" id="CPTAC-1322"/>
<dbReference type="CPTAC" id="CPTAC-1526"/>
<dbReference type="CPTAC" id="CPTAC-1527"/>
<dbReference type="MassIVE" id="Q12889"/>
<dbReference type="PaxDb" id="9606-ENSP00000358747"/>
<dbReference type="PeptideAtlas" id="Q12889"/>
<dbReference type="ProteomicsDB" id="59005"/>
<dbReference type="Antibodypedia" id="33809">
    <property type="antibodies" value="118 antibodies from 27 providers"/>
</dbReference>
<dbReference type="DNASU" id="5016"/>
<dbReference type="Ensembl" id="ENST00000369732.4">
    <property type="protein sequence ID" value="ENSP00000358747.3"/>
    <property type="gene ID" value="ENSG00000085465.13"/>
</dbReference>
<dbReference type="GeneID" id="5016"/>
<dbReference type="KEGG" id="hsa:5016"/>
<dbReference type="MANE-Select" id="ENST00000369732.4">
    <property type="protein sequence ID" value="ENSP00000358747.3"/>
    <property type="RefSeq nucleotide sequence ID" value="NM_002557.4"/>
    <property type="RefSeq protein sequence ID" value="NP_002548.3"/>
</dbReference>
<dbReference type="UCSC" id="uc001eba.4">
    <property type="organism name" value="human"/>
</dbReference>
<dbReference type="AGR" id="HGNC:8524"/>
<dbReference type="CTD" id="5016"/>
<dbReference type="DisGeNET" id="5016"/>
<dbReference type="GeneCards" id="OVGP1"/>
<dbReference type="HGNC" id="HGNC:8524">
    <property type="gene designation" value="OVGP1"/>
</dbReference>
<dbReference type="HPA" id="ENSG00000085465">
    <property type="expression patterns" value="Tissue enriched (fallopian)"/>
</dbReference>
<dbReference type="MIM" id="603578">
    <property type="type" value="gene"/>
</dbReference>
<dbReference type="neXtProt" id="NX_Q12889"/>
<dbReference type="OpenTargets" id="ENSG00000085465"/>
<dbReference type="PharmGKB" id="PA32852"/>
<dbReference type="VEuPathDB" id="HostDB:ENSG00000085465"/>
<dbReference type="eggNOG" id="KOG2806">
    <property type="taxonomic scope" value="Eukaryota"/>
</dbReference>
<dbReference type="GeneTree" id="ENSGT00940000162223"/>
<dbReference type="HOGENOM" id="CLU_002833_12_0_1"/>
<dbReference type="InParanoid" id="Q12889"/>
<dbReference type="OMA" id="VKREHFG"/>
<dbReference type="OrthoDB" id="76388at2759"/>
<dbReference type="PAN-GO" id="Q12889">
    <property type="GO annotations" value="4 GO annotations based on evolutionary models"/>
</dbReference>
<dbReference type="PhylomeDB" id="Q12889"/>
<dbReference type="TreeFam" id="TF315610"/>
<dbReference type="PathwayCommons" id="Q12889"/>
<dbReference type="Reactome" id="R-HSA-2534343">
    <property type="pathway name" value="Interaction With Cumulus Cells And The Zona Pellucida"/>
</dbReference>
<dbReference type="SignaLink" id="Q12889"/>
<dbReference type="BioGRID-ORCS" id="5016">
    <property type="hits" value="42 hits in 1150 CRISPR screens"/>
</dbReference>
<dbReference type="ChiTaRS" id="OVGP1">
    <property type="organism name" value="human"/>
</dbReference>
<dbReference type="GeneWiki" id="OVGP1"/>
<dbReference type="GenomeRNAi" id="5016"/>
<dbReference type="Pharos" id="Q12889">
    <property type="development level" value="Tbio"/>
</dbReference>
<dbReference type="PRO" id="PR:Q12889"/>
<dbReference type="Proteomes" id="UP000005640">
    <property type="component" value="Chromosome 1"/>
</dbReference>
<dbReference type="RNAct" id="Q12889">
    <property type="molecule type" value="protein"/>
</dbReference>
<dbReference type="Bgee" id="ENSG00000085465">
    <property type="expression patterns" value="Expressed in right uterine tube and 156 other cell types or tissues"/>
</dbReference>
<dbReference type="GO" id="GO:0005829">
    <property type="term" value="C:cytosol"/>
    <property type="evidence" value="ECO:0000304"/>
    <property type="project" value="Reactome"/>
</dbReference>
<dbReference type="GO" id="GO:0035805">
    <property type="term" value="C:egg coat"/>
    <property type="evidence" value="ECO:0007669"/>
    <property type="project" value="Ensembl"/>
</dbReference>
<dbReference type="GO" id="GO:0005576">
    <property type="term" value="C:extracellular region"/>
    <property type="evidence" value="ECO:0000318"/>
    <property type="project" value="GO_Central"/>
</dbReference>
<dbReference type="GO" id="GO:0043231">
    <property type="term" value="C:intracellular membrane-bounded organelle"/>
    <property type="evidence" value="ECO:0000314"/>
    <property type="project" value="HPA"/>
</dbReference>
<dbReference type="GO" id="GO:0015630">
    <property type="term" value="C:microtubule cytoskeleton"/>
    <property type="evidence" value="ECO:0000314"/>
    <property type="project" value="HPA"/>
</dbReference>
<dbReference type="GO" id="GO:0098595">
    <property type="term" value="C:perivitelline space"/>
    <property type="evidence" value="ECO:0007669"/>
    <property type="project" value="Ensembl"/>
</dbReference>
<dbReference type="GO" id="GO:0030133">
    <property type="term" value="C:transport vesicle"/>
    <property type="evidence" value="ECO:0007669"/>
    <property type="project" value="UniProtKB-SubCell"/>
</dbReference>
<dbReference type="GO" id="GO:0008061">
    <property type="term" value="F:chitin binding"/>
    <property type="evidence" value="ECO:0007669"/>
    <property type="project" value="InterPro"/>
</dbReference>
<dbReference type="GO" id="GO:0004568">
    <property type="term" value="F:chitinase activity"/>
    <property type="evidence" value="ECO:0000318"/>
    <property type="project" value="GO_Central"/>
</dbReference>
<dbReference type="GO" id="GO:0005975">
    <property type="term" value="P:carbohydrate metabolic process"/>
    <property type="evidence" value="ECO:0007669"/>
    <property type="project" value="InterPro"/>
</dbReference>
<dbReference type="GO" id="GO:0006032">
    <property type="term" value="P:chitin catabolic process"/>
    <property type="evidence" value="ECO:0000318"/>
    <property type="project" value="GO_Central"/>
</dbReference>
<dbReference type="GO" id="GO:0007565">
    <property type="term" value="P:female pregnancy"/>
    <property type="evidence" value="ECO:0000304"/>
    <property type="project" value="ProtInc"/>
</dbReference>
<dbReference type="GO" id="GO:2000360">
    <property type="term" value="P:negative regulation of binding of sperm to zona pellucida"/>
    <property type="evidence" value="ECO:0007669"/>
    <property type="project" value="Ensembl"/>
</dbReference>
<dbReference type="GO" id="GO:0007338">
    <property type="term" value="P:single fertilization"/>
    <property type="evidence" value="ECO:0007669"/>
    <property type="project" value="UniProtKB-KW"/>
</dbReference>
<dbReference type="CDD" id="cd02872">
    <property type="entry name" value="GH18_chitolectin_chitotriosidase"/>
    <property type="match status" value="1"/>
</dbReference>
<dbReference type="FunFam" id="3.20.20.80:FF:000007">
    <property type="entry name" value="Acidic mammalian chitinase"/>
    <property type="match status" value="1"/>
</dbReference>
<dbReference type="FunFam" id="3.10.50.10:FF:000001">
    <property type="entry name" value="Chitinase 3-like 1"/>
    <property type="match status" value="1"/>
</dbReference>
<dbReference type="Gene3D" id="3.10.50.10">
    <property type="match status" value="1"/>
</dbReference>
<dbReference type="Gene3D" id="3.20.20.80">
    <property type="entry name" value="Glycosidases"/>
    <property type="match status" value="1"/>
</dbReference>
<dbReference type="InterPro" id="IPR011583">
    <property type="entry name" value="Chitinase_II/V-like_cat"/>
</dbReference>
<dbReference type="InterPro" id="IPR029070">
    <property type="entry name" value="Chitinase_insertion_sf"/>
</dbReference>
<dbReference type="InterPro" id="IPR001223">
    <property type="entry name" value="Glyco_hydro18_cat"/>
</dbReference>
<dbReference type="InterPro" id="IPR017853">
    <property type="entry name" value="Glycoside_hydrolase_SF"/>
</dbReference>
<dbReference type="InterPro" id="IPR050314">
    <property type="entry name" value="Glycosyl_Hydrlase_18"/>
</dbReference>
<dbReference type="PANTHER" id="PTHR11177">
    <property type="entry name" value="CHITINASE"/>
    <property type="match status" value="1"/>
</dbReference>
<dbReference type="PANTHER" id="PTHR11177:SF385">
    <property type="entry name" value="OVIDUCT-SPECIFIC GLYCOPROTEIN"/>
    <property type="match status" value="1"/>
</dbReference>
<dbReference type="Pfam" id="PF00704">
    <property type="entry name" value="Glyco_hydro_18"/>
    <property type="match status" value="1"/>
</dbReference>
<dbReference type="SMART" id="SM00636">
    <property type="entry name" value="Glyco_18"/>
    <property type="match status" value="1"/>
</dbReference>
<dbReference type="SUPFAM" id="SSF51445">
    <property type="entry name" value="(Trans)glycosidases"/>
    <property type="match status" value="1"/>
</dbReference>
<dbReference type="SUPFAM" id="SSF54556">
    <property type="entry name" value="Chitinase insertion domain"/>
    <property type="match status" value="1"/>
</dbReference>
<dbReference type="PROSITE" id="PS51910">
    <property type="entry name" value="GH18_2"/>
    <property type="match status" value="1"/>
</dbReference>
<comment type="function">
    <text>Binds to oocyte zona pellucida in vivo. May play a role in the fertilization process and/or early embryonic development.</text>
</comment>
<comment type="subcellular location">
    <subcellularLocation>
        <location>Cytoplasmic vesicle</location>
        <location>Secretory vesicle</location>
    </subcellularLocation>
    <text>Secretory granules.</text>
</comment>
<comment type="tissue specificity">
    <text>Oviduct.</text>
</comment>
<comment type="similarity">
    <text evidence="7">Belongs to the glycosyl hydrolase 18 family.</text>
</comment>
<gene>
    <name type="primary">OVGP1</name>
    <name type="synonym">MUC9</name>
    <name type="synonym">OGP</name>
</gene>